<proteinExistence type="evidence at transcript level"/>
<organism>
    <name type="scientific">Rattus norvegicus</name>
    <name type="common">Rat</name>
    <dbReference type="NCBI Taxonomy" id="10116"/>
    <lineage>
        <taxon>Eukaryota</taxon>
        <taxon>Metazoa</taxon>
        <taxon>Chordata</taxon>
        <taxon>Craniata</taxon>
        <taxon>Vertebrata</taxon>
        <taxon>Euteleostomi</taxon>
        <taxon>Mammalia</taxon>
        <taxon>Eutheria</taxon>
        <taxon>Euarchontoglires</taxon>
        <taxon>Glires</taxon>
        <taxon>Rodentia</taxon>
        <taxon>Myomorpha</taxon>
        <taxon>Muroidea</taxon>
        <taxon>Muridae</taxon>
        <taxon>Murinae</taxon>
        <taxon>Rattus</taxon>
    </lineage>
</organism>
<protein>
    <recommendedName>
        <fullName evidence="4">Fatty acid-binding protein 12</fullName>
    </recommendedName>
</protein>
<reference evidence="5 6" key="1">
    <citation type="journal article" date="2008" name="Genomics">
        <title>A novel fatty acid-binding protein (FABP) gene resulting from tandem gene duplication in mammals: transcription in rat retina and testis.</title>
        <authorList>
            <person name="Liu R.Z."/>
            <person name="Li X."/>
            <person name="Godbout R."/>
        </authorList>
    </citation>
    <scope>NUCLEOTIDE SEQUENCE [MRNA]</scope>
    <scope>TISSUE SPECIFICITY</scope>
    <scope>DEVELOPMENTAL STAGE</scope>
    <source>
        <strain evidence="6">Sprague-Dawley</strain>
        <tissue evidence="6">Retina</tissue>
    </source>
</reference>
<reference evidence="7" key="2">
    <citation type="submission" date="2005-07" db="EMBL/GenBank/DDBJ databases">
        <authorList>
            <person name="Mural R.J."/>
            <person name="Adams M.D."/>
            <person name="Myers E.W."/>
            <person name="Smith H.O."/>
            <person name="Venter J.C."/>
        </authorList>
    </citation>
    <scope>NUCLEOTIDE SEQUENCE [LARGE SCALE GENOMIC DNA]</scope>
</reference>
<sequence length="132" mass="14860">MVDQLQGTWKSVSCENFENYMKELGAGRAIRKLGCLARPVVTISTDGDRITIKTKSIFKNKEISFKLGEEFEEITPGGRKSKSTVVLDNDSLVQVQDWDGKEATIRRRLVDGKMVVESAVNNVTCTRTYQRV</sequence>
<dbReference type="EMBL" id="EU733648">
    <property type="protein sequence ID" value="ACI03638.1"/>
    <property type="molecule type" value="mRNA"/>
</dbReference>
<dbReference type="EMBL" id="CH473961">
    <property type="protein sequence ID" value="EDM00992.1"/>
    <property type="molecule type" value="Genomic_DNA"/>
</dbReference>
<dbReference type="RefSeq" id="NP_001128086.1">
    <property type="nucleotide sequence ID" value="NM_001134614.1"/>
</dbReference>
<dbReference type="RefSeq" id="XP_006232207.1">
    <property type="nucleotide sequence ID" value="XM_006232145.3"/>
</dbReference>
<dbReference type="RefSeq" id="XP_006232208.1">
    <property type="nucleotide sequence ID" value="XM_006232146.3"/>
</dbReference>
<dbReference type="RefSeq" id="XP_006232210.1">
    <property type="nucleotide sequence ID" value="XM_006232148.3"/>
</dbReference>
<dbReference type="RefSeq" id="XP_017446512.1">
    <property type="nucleotide sequence ID" value="XM_017591023.1"/>
</dbReference>
<dbReference type="RefSeq" id="XP_017446513.1">
    <property type="nucleotide sequence ID" value="XM_017591024.1"/>
</dbReference>
<dbReference type="SMR" id="B7SUM8"/>
<dbReference type="FunCoup" id="B7SUM8">
    <property type="interactions" value="11"/>
</dbReference>
<dbReference type="STRING" id="10116.ENSRNOP00000072023"/>
<dbReference type="PhosphoSitePlus" id="B7SUM8"/>
<dbReference type="PaxDb" id="10116-ENSRNOP00000056087"/>
<dbReference type="Ensembl" id="ENSRNOT00000059326.4">
    <property type="protein sequence ID" value="ENSRNOP00000056087.2"/>
    <property type="gene ID" value="ENSRNOG00000038825.4"/>
</dbReference>
<dbReference type="GeneID" id="499570"/>
<dbReference type="KEGG" id="rno:499570"/>
<dbReference type="UCSC" id="RGD:1565000">
    <property type="organism name" value="rat"/>
</dbReference>
<dbReference type="AGR" id="RGD:1565000"/>
<dbReference type="CTD" id="646486"/>
<dbReference type="RGD" id="1565000">
    <property type="gene designation" value="Fabp12"/>
</dbReference>
<dbReference type="eggNOG" id="KOG4015">
    <property type="taxonomic scope" value="Eukaryota"/>
</dbReference>
<dbReference type="GeneTree" id="ENSGT00940000162398"/>
<dbReference type="HOGENOM" id="CLU_113772_0_0_1"/>
<dbReference type="InParanoid" id="B7SUM8"/>
<dbReference type="OMA" id="DWDGKEN"/>
<dbReference type="PhylomeDB" id="B7SUM8"/>
<dbReference type="TreeFam" id="TF316894"/>
<dbReference type="Reactome" id="R-RNO-163560">
    <property type="pathway name" value="Triglyceride catabolism"/>
</dbReference>
<dbReference type="PRO" id="PR:B7SUM8"/>
<dbReference type="Proteomes" id="UP000002494">
    <property type="component" value="Chromosome 2"/>
</dbReference>
<dbReference type="Proteomes" id="UP000234681">
    <property type="component" value="Chromosome 2"/>
</dbReference>
<dbReference type="Bgee" id="ENSRNOG00000038825">
    <property type="expression patterns" value="Expressed in testis and 5 other cell types or tissues"/>
</dbReference>
<dbReference type="GO" id="GO:0005829">
    <property type="term" value="C:cytosol"/>
    <property type="evidence" value="ECO:0000318"/>
    <property type="project" value="GO_Central"/>
</dbReference>
<dbReference type="GO" id="GO:0005634">
    <property type="term" value="C:nucleus"/>
    <property type="evidence" value="ECO:0000318"/>
    <property type="project" value="GO_Central"/>
</dbReference>
<dbReference type="GO" id="GO:0005504">
    <property type="term" value="F:fatty acid binding"/>
    <property type="evidence" value="ECO:0000318"/>
    <property type="project" value="GO_Central"/>
</dbReference>
<dbReference type="GO" id="GO:0015908">
    <property type="term" value="P:fatty acid transport"/>
    <property type="evidence" value="ECO:0000318"/>
    <property type="project" value="GO_Central"/>
</dbReference>
<dbReference type="CDD" id="cd19617">
    <property type="entry name" value="FABP12"/>
    <property type="match status" value="1"/>
</dbReference>
<dbReference type="FunFam" id="2.40.128.20:FF:000001">
    <property type="entry name" value="Fatty acid-binding protein, adipocyte"/>
    <property type="match status" value="1"/>
</dbReference>
<dbReference type="Gene3D" id="2.40.128.20">
    <property type="match status" value="1"/>
</dbReference>
<dbReference type="InterPro" id="IPR012674">
    <property type="entry name" value="Calycin"/>
</dbReference>
<dbReference type="InterPro" id="IPR000463">
    <property type="entry name" value="Fatty_acid-bd"/>
</dbReference>
<dbReference type="InterPro" id="IPR031259">
    <property type="entry name" value="ILBP"/>
</dbReference>
<dbReference type="InterPro" id="IPR000566">
    <property type="entry name" value="Lipocln_cytosolic_FA-bd_dom"/>
</dbReference>
<dbReference type="PANTHER" id="PTHR11955">
    <property type="entry name" value="FATTY ACID BINDING PROTEIN"/>
    <property type="match status" value="1"/>
</dbReference>
<dbReference type="Pfam" id="PF00061">
    <property type="entry name" value="Lipocalin"/>
    <property type="match status" value="1"/>
</dbReference>
<dbReference type="PRINTS" id="PR00178">
    <property type="entry name" value="FATTYACIDBP"/>
</dbReference>
<dbReference type="SUPFAM" id="SSF50814">
    <property type="entry name" value="Lipocalins"/>
    <property type="match status" value="1"/>
</dbReference>
<name>FBP12_RAT</name>
<feature type="chain" id="PRO_0000394457" description="Fatty acid-binding protein 12">
    <location>
        <begin position="1"/>
        <end position="132"/>
    </location>
</feature>
<feature type="binding site" evidence="1">
    <location>
        <position position="107"/>
    </location>
    <ligand>
        <name>a fatty acid</name>
        <dbReference type="ChEBI" id="CHEBI:28868"/>
    </ligand>
</feature>
<feature type="binding site" evidence="1">
    <location>
        <begin position="127"/>
        <end position="129"/>
    </location>
    <ligand>
        <name>a fatty acid</name>
        <dbReference type="ChEBI" id="CHEBI:28868"/>
    </ligand>
</feature>
<evidence type="ECO:0000250" key="1">
    <source>
        <dbReference type="UniProtKB" id="P02690"/>
    </source>
</evidence>
<evidence type="ECO:0000255" key="2"/>
<evidence type="ECO:0000269" key="3">
    <source>
    </source>
</evidence>
<evidence type="ECO:0000303" key="4">
    <source>
    </source>
</evidence>
<evidence type="ECO:0000305" key="5"/>
<evidence type="ECO:0000312" key="6">
    <source>
        <dbReference type="EMBL" id="ACI03638.1"/>
    </source>
</evidence>
<evidence type="ECO:0000312" key="7">
    <source>
        <dbReference type="EMBL" id="EDM00992.1"/>
    </source>
</evidence>
<accession>B7SUM8</accession>
<gene>
    <name evidence="4" type="primary">FABP12</name>
</gene>
<keyword id="KW-0446">Lipid-binding</keyword>
<keyword id="KW-1185">Reference proteome</keyword>
<keyword id="KW-0813">Transport</keyword>
<comment type="function">
    <text evidence="1">May play a role in lipid transport.</text>
</comment>
<comment type="tissue specificity">
    <text evidence="3">Highly expressed in adult retina and testis with lower levels in cerebral cortex, kidney and epididymis. In the retina, strongly expressed in the ganglion cell layer and throughout the inner nuclear layer in amacrine and bipolar cells. Not expressed in the outer nuclear layer. In the testis, detected in the seminiferous tubules.</text>
</comment>
<comment type="developmental stage">
    <text evidence="3">Expressed in adult but not at postnatal day 1. In the seminiferous tubule, expressed in first layer capped spermatids at stage VII and in spermatids closer to the lumen of the tubule at stage XII. Not detected in spermatogonia, first layer of spermatocytes or mature spermatozoa.</text>
</comment>
<comment type="similarity">
    <text evidence="2">Belongs to the calycin superfamily. Fatty-acid binding protein (FABP) family.</text>
</comment>